<organism>
    <name type="scientific">Desulforamulus reducens (strain ATCC BAA-1160 / DSM 100696 / MI-1)</name>
    <name type="common">Desulfotomaculum reducens</name>
    <dbReference type="NCBI Taxonomy" id="349161"/>
    <lineage>
        <taxon>Bacteria</taxon>
        <taxon>Bacillati</taxon>
        <taxon>Bacillota</taxon>
        <taxon>Clostridia</taxon>
        <taxon>Eubacteriales</taxon>
        <taxon>Peptococcaceae</taxon>
        <taxon>Desulforamulus</taxon>
    </lineage>
</organism>
<name>THIG_DESRM</name>
<comment type="function">
    <text evidence="1">Catalyzes the rearrangement of 1-deoxy-D-xylulose 5-phosphate (DXP) to produce the thiazole phosphate moiety of thiamine. Sulfur is provided by the thiocarboxylate moiety of the carrier protein ThiS. In vitro, sulfur can be provided by H(2)S.</text>
</comment>
<comment type="catalytic activity">
    <reaction evidence="1">
        <text>[ThiS sulfur-carrier protein]-C-terminal-Gly-aminoethanethioate + 2-iminoacetate + 1-deoxy-D-xylulose 5-phosphate = [ThiS sulfur-carrier protein]-C-terminal Gly-Gly + 2-[(2R,5Z)-2-carboxy-4-methylthiazol-5(2H)-ylidene]ethyl phosphate + 2 H2O + H(+)</text>
        <dbReference type="Rhea" id="RHEA:26297"/>
        <dbReference type="Rhea" id="RHEA-COMP:12909"/>
        <dbReference type="Rhea" id="RHEA-COMP:19908"/>
        <dbReference type="ChEBI" id="CHEBI:15377"/>
        <dbReference type="ChEBI" id="CHEBI:15378"/>
        <dbReference type="ChEBI" id="CHEBI:57792"/>
        <dbReference type="ChEBI" id="CHEBI:62899"/>
        <dbReference type="ChEBI" id="CHEBI:77846"/>
        <dbReference type="ChEBI" id="CHEBI:90778"/>
        <dbReference type="ChEBI" id="CHEBI:232372"/>
        <dbReference type="EC" id="2.8.1.10"/>
    </reaction>
</comment>
<comment type="pathway">
    <text evidence="1">Cofactor biosynthesis; thiamine diphosphate biosynthesis.</text>
</comment>
<comment type="subunit">
    <text evidence="1">Homotetramer. Forms heterodimers with either ThiH or ThiS.</text>
</comment>
<comment type="subcellular location">
    <subcellularLocation>
        <location evidence="1">Cytoplasm</location>
    </subcellularLocation>
</comment>
<comment type="similarity">
    <text evidence="1">Belongs to the ThiG family.</text>
</comment>
<gene>
    <name evidence="1" type="primary">thiG</name>
    <name type="ordered locus">Dred_0073</name>
</gene>
<feature type="chain" id="PRO_1000072336" description="Thiazole synthase">
    <location>
        <begin position="1"/>
        <end position="257"/>
    </location>
</feature>
<feature type="active site" description="Schiff-base intermediate with DXP" evidence="1">
    <location>
        <position position="97"/>
    </location>
</feature>
<feature type="binding site" evidence="1">
    <location>
        <position position="158"/>
    </location>
    <ligand>
        <name>1-deoxy-D-xylulose 5-phosphate</name>
        <dbReference type="ChEBI" id="CHEBI:57792"/>
    </ligand>
</feature>
<feature type="binding site" evidence="1">
    <location>
        <begin position="184"/>
        <end position="185"/>
    </location>
    <ligand>
        <name>1-deoxy-D-xylulose 5-phosphate</name>
        <dbReference type="ChEBI" id="CHEBI:57792"/>
    </ligand>
</feature>
<feature type="binding site" evidence="1">
    <location>
        <begin position="206"/>
        <end position="207"/>
    </location>
    <ligand>
        <name>1-deoxy-D-xylulose 5-phosphate</name>
        <dbReference type="ChEBI" id="CHEBI:57792"/>
    </ligand>
</feature>
<evidence type="ECO:0000255" key="1">
    <source>
        <dbReference type="HAMAP-Rule" id="MF_00443"/>
    </source>
</evidence>
<dbReference type="EC" id="2.8.1.10" evidence="1"/>
<dbReference type="EMBL" id="CP000612">
    <property type="protein sequence ID" value="ABO48623.1"/>
    <property type="molecule type" value="Genomic_DNA"/>
</dbReference>
<dbReference type="RefSeq" id="WP_011876467.1">
    <property type="nucleotide sequence ID" value="NC_009253.1"/>
</dbReference>
<dbReference type="SMR" id="A4J0M0"/>
<dbReference type="STRING" id="349161.Dred_0073"/>
<dbReference type="KEGG" id="drm:Dred_0073"/>
<dbReference type="eggNOG" id="COG2022">
    <property type="taxonomic scope" value="Bacteria"/>
</dbReference>
<dbReference type="HOGENOM" id="CLU_062233_1_0_9"/>
<dbReference type="OrthoDB" id="9805935at2"/>
<dbReference type="UniPathway" id="UPA00060"/>
<dbReference type="Proteomes" id="UP000001556">
    <property type="component" value="Chromosome"/>
</dbReference>
<dbReference type="GO" id="GO:0005737">
    <property type="term" value="C:cytoplasm"/>
    <property type="evidence" value="ECO:0007669"/>
    <property type="project" value="UniProtKB-SubCell"/>
</dbReference>
<dbReference type="GO" id="GO:1990107">
    <property type="term" value="F:thiazole synthase activity"/>
    <property type="evidence" value="ECO:0007669"/>
    <property type="project" value="UniProtKB-EC"/>
</dbReference>
<dbReference type="GO" id="GO:0009229">
    <property type="term" value="P:thiamine diphosphate biosynthetic process"/>
    <property type="evidence" value="ECO:0007669"/>
    <property type="project" value="UniProtKB-UniRule"/>
</dbReference>
<dbReference type="CDD" id="cd04728">
    <property type="entry name" value="ThiG"/>
    <property type="match status" value="1"/>
</dbReference>
<dbReference type="Gene3D" id="3.20.20.70">
    <property type="entry name" value="Aldolase class I"/>
    <property type="match status" value="1"/>
</dbReference>
<dbReference type="HAMAP" id="MF_00443">
    <property type="entry name" value="ThiG"/>
    <property type="match status" value="1"/>
</dbReference>
<dbReference type="InterPro" id="IPR013785">
    <property type="entry name" value="Aldolase_TIM"/>
</dbReference>
<dbReference type="InterPro" id="IPR033983">
    <property type="entry name" value="Thiazole_synthase_ThiG"/>
</dbReference>
<dbReference type="InterPro" id="IPR008867">
    <property type="entry name" value="ThiG"/>
</dbReference>
<dbReference type="PANTHER" id="PTHR34266">
    <property type="entry name" value="THIAZOLE SYNTHASE"/>
    <property type="match status" value="1"/>
</dbReference>
<dbReference type="PANTHER" id="PTHR34266:SF2">
    <property type="entry name" value="THIAZOLE SYNTHASE"/>
    <property type="match status" value="1"/>
</dbReference>
<dbReference type="Pfam" id="PF05690">
    <property type="entry name" value="ThiG"/>
    <property type="match status" value="1"/>
</dbReference>
<dbReference type="SUPFAM" id="SSF110399">
    <property type="entry name" value="ThiG-like"/>
    <property type="match status" value="1"/>
</dbReference>
<accession>A4J0M0</accession>
<reference key="1">
    <citation type="submission" date="2007-03" db="EMBL/GenBank/DDBJ databases">
        <title>Complete sequence of Desulfotomaculum reducens MI-1.</title>
        <authorList>
            <consortium name="US DOE Joint Genome Institute"/>
            <person name="Copeland A."/>
            <person name="Lucas S."/>
            <person name="Lapidus A."/>
            <person name="Barry K."/>
            <person name="Detter J.C."/>
            <person name="Glavina del Rio T."/>
            <person name="Hammon N."/>
            <person name="Israni S."/>
            <person name="Dalin E."/>
            <person name="Tice H."/>
            <person name="Pitluck S."/>
            <person name="Sims D."/>
            <person name="Brettin T."/>
            <person name="Bruce D."/>
            <person name="Han C."/>
            <person name="Tapia R."/>
            <person name="Schmutz J."/>
            <person name="Larimer F."/>
            <person name="Land M."/>
            <person name="Hauser L."/>
            <person name="Kyrpides N."/>
            <person name="Kim E."/>
            <person name="Tebo B.M."/>
            <person name="Richardson P."/>
        </authorList>
    </citation>
    <scope>NUCLEOTIDE SEQUENCE [LARGE SCALE GENOMIC DNA]</scope>
    <source>
        <strain>ATCC BAA-1160 / DSM 100696 / MI-1</strain>
    </source>
</reference>
<keyword id="KW-0963">Cytoplasm</keyword>
<keyword id="KW-1185">Reference proteome</keyword>
<keyword id="KW-0704">Schiff base</keyword>
<keyword id="KW-0784">Thiamine biosynthesis</keyword>
<keyword id="KW-0808">Transferase</keyword>
<protein>
    <recommendedName>
        <fullName evidence="1">Thiazole synthase</fullName>
        <ecNumber evidence="1">2.8.1.10</ecNumber>
    </recommendedName>
</protein>
<proteinExistence type="inferred from homology"/>
<sequence length="257" mass="27358">MKEVFSVGGKELTSRLLIGSGKYSTNKLIPAILDASGSQVITMAMRRVDTEFTEENILNYIPSDCVLMPNTSGARNAQEAIRIARLARAAGCGDWVKIEVISDNRYLLPDNYETIRATEVLTAEGFQVFPYMSPDLMVAKELERVGAAAVMPLGAPIGSNRGLQTRELVRILIEEISLPVIVDAGIGRPSEAAEAMEMGAAAVLVNTAVATAKDPVAMARAFGLAVEAGRTAYLAGPGATQQVARASSPLTGFLREE</sequence>